<proteinExistence type="evidence at transcript level"/>
<accession>Q6IN33</accession>
<accession>Q8K4S2</accession>
<name>RCAN1_RAT</name>
<comment type="function">
    <text evidence="2">Inhibits calcineurin-dependent transcriptional responses by binding to the catalytic domain of calcineurin A. Could play a role during central nervous system development.</text>
</comment>
<comment type="subunit">
    <text evidence="1 2">Interacts with RAF1, PPP3R1 and PPP3CA.</text>
</comment>
<comment type="PTM">
    <text evidence="1">Phosphorylation increases its ability to inhibit calcineurin and decreases protein half-life.</text>
</comment>
<comment type="similarity">
    <text evidence="4">Belongs to the RCAN family.</text>
</comment>
<dbReference type="EMBL" id="AB075973">
    <property type="protein sequence ID" value="BAC06443.1"/>
    <property type="molecule type" value="mRNA"/>
</dbReference>
<dbReference type="EMBL" id="BC072478">
    <property type="protein sequence ID" value="AAH72478.1"/>
    <property type="molecule type" value="mRNA"/>
</dbReference>
<dbReference type="RefSeq" id="NP_714946.2">
    <property type="nucleotide sequence ID" value="NM_153724.2"/>
</dbReference>
<dbReference type="SMR" id="Q6IN33"/>
<dbReference type="FunCoup" id="Q6IN33">
    <property type="interactions" value="1051"/>
</dbReference>
<dbReference type="IntAct" id="Q6IN33">
    <property type="interactions" value="1"/>
</dbReference>
<dbReference type="STRING" id="10116.ENSRNOP00000002715"/>
<dbReference type="iPTMnet" id="Q6IN33"/>
<dbReference type="PhosphoSitePlus" id="Q6IN33"/>
<dbReference type="PaxDb" id="10116-ENSRNOP00000002715"/>
<dbReference type="Ensembl" id="ENSRNOT00000002715.7">
    <property type="protein sequence ID" value="ENSRNOP00000002715.4"/>
    <property type="gene ID" value="ENSRNOG00000001979.8"/>
</dbReference>
<dbReference type="GeneID" id="266766"/>
<dbReference type="KEGG" id="rno:266766"/>
<dbReference type="UCSC" id="RGD:631338">
    <property type="organism name" value="rat"/>
</dbReference>
<dbReference type="AGR" id="RGD:631338"/>
<dbReference type="CTD" id="1827"/>
<dbReference type="RGD" id="631338">
    <property type="gene designation" value="Rcan1"/>
</dbReference>
<dbReference type="eggNOG" id="KOG4019">
    <property type="taxonomic scope" value="Eukaryota"/>
</dbReference>
<dbReference type="GeneTree" id="ENSGT00940000159870"/>
<dbReference type="HOGENOM" id="CLU_076190_2_0_1"/>
<dbReference type="InParanoid" id="Q6IN33"/>
<dbReference type="OMA" id="RIMQTRC"/>
<dbReference type="PRO" id="PR:Q6IN33"/>
<dbReference type="Proteomes" id="UP000002494">
    <property type="component" value="Chromosome 11"/>
</dbReference>
<dbReference type="Bgee" id="ENSRNOG00000001979">
    <property type="expression patterns" value="Expressed in liver and 19 other cell types or tissues"/>
</dbReference>
<dbReference type="GO" id="GO:0005737">
    <property type="term" value="C:cytoplasm"/>
    <property type="evidence" value="ECO:0000266"/>
    <property type="project" value="RGD"/>
</dbReference>
<dbReference type="GO" id="GO:0005634">
    <property type="term" value="C:nucleus"/>
    <property type="evidence" value="ECO:0000266"/>
    <property type="project" value="RGD"/>
</dbReference>
<dbReference type="GO" id="GO:0008597">
    <property type="term" value="F:calcium-dependent protein serine/threonine phosphatase regulator activity"/>
    <property type="evidence" value="ECO:0000318"/>
    <property type="project" value="GO_Central"/>
</dbReference>
<dbReference type="GO" id="GO:0003676">
    <property type="term" value="F:nucleic acid binding"/>
    <property type="evidence" value="ECO:0007669"/>
    <property type="project" value="InterPro"/>
</dbReference>
<dbReference type="GO" id="GO:0030346">
    <property type="term" value="F:protein phosphatase 2B binding"/>
    <property type="evidence" value="ECO:0000304"/>
    <property type="project" value="RGD"/>
</dbReference>
<dbReference type="GO" id="GO:0004864">
    <property type="term" value="F:protein phosphatase inhibitor activity"/>
    <property type="evidence" value="ECO:0000266"/>
    <property type="project" value="RGD"/>
</dbReference>
<dbReference type="GO" id="GO:0033173">
    <property type="term" value="P:calcineurin-NFAT signaling cascade"/>
    <property type="evidence" value="ECO:0000266"/>
    <property type="project" value="RGD"/>
</dbReference>
<dbReference type="GO" id="GO:0019722">
    <property type="term" value="P:calcium-mediated signaling"/>
    <property type="evidence" value="ECO:0000318"/>
    <property type="project" value="GO_Central"/>
</dbReference>
<dbReference type="GO" id="GO:0031987">
    <property type="term" value="P:locomotion involved in locomotory behavior"/>
    <property type="evidence" value="ECO:0000266"/>
    <property type="project" value="RGD"/>
</dbReference>
<dbReference type="GO" id="GO:0070885">
    <property type="term" value="P:negative regulation of calcineurin-NFAT signaling cascade"/>
    <property type="evidence" value="ECO:0000250"/>
    <property type="project" value="UniProtKB"/>
</dbReference>
<dbReference type="GO" id="GO:0051151">
    <property type="term" value="P:negative regulation of smooth muscle cell differentiation"/>
    <property type="evidence" value="ECO:0000314"/>
    <property type="project" value="RGD"/>
</dbReference>
<dbReference type="GO" id="GO:0043627">
    <property type="term" value="P:response to estrogen"/>
    <property type="evidence" value="ECO:0000315"/>
    <property type="project" value="RGD"/>
</dbReference>
<dbReference type="GO" id="GO:0002931">
    <property type="term" value="P:response to ischemia"/>
    <property type="evidence" value="ECO:0000266"/>
    <property type="project" value="RGD"/>
</dbReference>
<dbReference type="GO" id="GO:0009612">
    <property type="term" value="P:response to mechanical stimulus"/>
    <property type="evidence" value="ECO:0000270"/>
    <property type="project" value="RGD"/>
</dbReference>
<dbReference type="GO" id="GO:0006979">
    <property type="term" value="P:response to oxidative stress"/>
    <property type="evidence" value="ECO:0000266"/>
    <property type="project" value="RGD"/>
</dbReference>
<dbReference type="GO" id="GO:0006950">
    <property type="term" value="P:response to stress"/>
    <property type="evidence" value="ECO:0000266"/>
    <property type="project" value="RGD"/>
</dbReference>
<dbReference type="GO" id="GO:0007614">
    <property type="term" value="P:short-term memory"/>
    <property type="evidence" value="ECO:0000266"/>
    <property type="project" value="RGD"/>
</dbReference>
<dbReference type="GO" id="GO:0048741">
    <property type="term" value="P:skeletal muscle fiber development"/>
    <property type="evidence" value="ECO:0000266"/>
    <property type="project" value="RGD"/>
</dbReference>
<dbReference type="GO" id="GO:0007519">
    <property type="term" value="P:skeletal muscle tissue development"/>
    <property type="evidence" value="ECO:0000270"/>
    <property type="project" value="RGD"/>
</dbReference>
<dbReference type="CDD" id="cd12708">
    <property type="entry name" value="RRM_RCAN1"/>
    <property type="match status" value="1"/>
</dbReference>
<dbReference type="FunFam" id="3.30.70.330:FF:000221">
    <property type="entry name" value="calcipressin-1 isoform X1"/>
    <property type="match status" value="1"/>
</dbReference>
<dbReference type="Gene3D" id="3.30.70.330">
    <property type="match status" value="1"/>
</dbReference>
<dbReference type="InterPro" id="IPR006931">
    <property type="entry name" value="Calcipressin"/>
</dbReference>
<dbReference type="InterPro" id="IPR012677">
    <property type="entry name" value="Nucleotide-bd_a/b_plait_sf"/>
</dbReference>
<dbReference type="InterPro" id="IPR035979">
    <property type="entry name" value="RBD_domain_sf"/>
</dbReference>
<dbReference type="InterPro" id="IPR034906">
    <property type="entry name" value="RCAN1_RRM"/>
</dbReference>
<dbReference type="PANTHER" id="PTHR10300">
    <property type="entry name" value="CALCIPRESSIN"/>
    <property type="match status" value="1"/>
</dbReference>
<dbReference type="PANTHER" id="PTHR10300:SF4">
    <property type="entry name" value="CALCIPRESSIN-1"/>
    <property type="match status" value="1"/>
</dbReference>
<dbReference type="Pfam" id="PF04847">
    <property type="entry name" value="Calcipressin"/>
    <property type="match status" value="1"/>
</dbReference>
<dbReference type="SUPFAM" id="SSF54928">
    <property type="entry name" value="RNA-binding domain, RBD"/>
    <property type="match status" value="1"/>
</dbReference>
<gene>
    <name type="primary">Rcan1</name>
    <name type="synonym">Dscr1</name>
</gene>
<organism>
    <name type="scientific">Rattus norvegicus</name>
    <name type="common">Rat</name>
    <dbReference type="NCBI Taxonomy" id="10116"/>
    <lineage>
        <taxon>Eukaryota</taxon>
        <taxon>Metazoa</taxon>
        <taxon>Chordata</taxon>
        <taxon>Craniata</taxon>
        <taxon>Vertebrata</taxon>
        <taxon>Euteleostomi</taxon>
        <taxon>Mammalia</taxon>
        <taxon>Eutheria</taxon>
        <taxon>Euarchontoglires</taxon>
        <taxon>Glires</taxon>
        <taxon>Rodentia</taxon>
        <taxon>Myomorpha</taxon>
        <taxon>Muroidea</taxon>
        <taxon>Muridae</taxon>
        <taxon>Murinae</taxon>
        <taxon>Rattus</taxon>
    </lineage>
</organism>
<protein>
    <recommendedName>
        <fullName>Calcipressin-1</fullName>
    </recommendedName>
    <alternativeName>
        <fullName>Down syndrome critical region protein 1 homolog</fullName>
    </alternativeName>
    <alternativeName>
        <fullName>Myocyte-enriched calcineurin-interacting protein 1</fullName>
        <shortName>MCIP1</shortName>
    </alternativeName>
    <alternativeName>
        <fullName>Regulator of calcineurin 1</fullName>
    </alternativeName>
</protein>
<keyword id="KW-0597">Phosphoprotein</keyword>
<keyword id="KW-1185">Reference proteome</keyword>
<sequence length="199" mass="22948">MHFRDFNYNFSSLIACVANGDVFSESETRAKFESLFRTYDKDITFQYFKSFKRVRINFSNPLSAADARLQLHKTEFLGKEMKLYFAQTLHIGSSHLAPPNPDKQFLISPPASPPVGWKQVEDATPVINYDLLYAISKLGPGEKYELHAATDTTPSVVVHVCESDQEEEEEEEEEMERMKRPKPKIIQTRRPEYTPIHLS</sequence>
<reference key="1">
    <citation type="submission" date="2001-12" db="EMBL/GenBank/DDBJ databases">
        <title>Rat myocyte-enriched calcineurin interacting protein 1, splice variant 4 mRNA, complete cds.</title>
        <authorList>
            <person name="Odashima M."/>
            <person name="Nagata K."/>
            <person name="Obata K."/>
            <person name="Somura F."/>
            <person name="Izawa H."/>
            <person name="Miyazaki T."/>
            <person name="Murata Y."/>
            <person name="Seo H."/>
            <person name="Yamada Y."/>
            <person name="Yokota M."/>
        </authorList>
    </citation>
    <scope>NUCLEOTIDE SEQUENCE [MRNA]</scope>
</reference>
<reference key="2">
    <citation type="journal article" date="2004" name="Genome Res.">
        <title>The status, quality, and expansion of the NIH full-length cDNA project: the Mammalian Gene Collection (MGC).</title>
        <authorList>
            <consortium name="The MGC Project Team"/>
        </authorList>
    </citation>
    <scope>NUCLEOTIDE SEQUENCE [LARGE SCALE MRNA]</scope>
    <source>
        <tissue>Heart</tissue>
    </source>
</reference>
<evidence type="ECO:0000250" key="1">
    <source>
        <dbReference type="UniProtKB" id="P53805"/>
    </source>
</evidence>
<evidence type="ECO:0000250" key="2">
    <source>
        <dbReference type="UniProtKB" id="Q9JHG6"/>
    </source>
</evidence>
<evidence type="ECO:0000256" key="3">
    <source>
        <dbReference type="SAM" id="MobiDB-lite"/>
    </source>
</evidence>
<evidence type="ECO:0000305" key="4"/>
<feature type="chain" id="PRO_0000295267" description="Calcipressin-1">
    <location>
        <begin position="1"/>
        <end position="199"/>
    </location>
</feature>
<feature type="region of interest" description="Disordered" evidence="3">
    <location>
        <begin position="162"/>
        <end position="199"/>
    </location>
</feature>
<feature type="compositionally biased region" description="Acidic residues" evidence="3">
    <location>
        <begin position="163"/>
        <end position="175"/>
    </location>
</feature>
<feature type="modified residue" description="Phosphoserine" evidence="1">
    <location>
        <position position="108"/>
    </location>
</feature>
<feature type="modified residue" description="Phosphoserine" evidence="1">
    <location>
        <position position="112"/>
    </location>
</feature>
<feature type="modified residue" description="Phosphoserine" evidence="2">
    <location>
        <position position="163"/>
    </location>
</feature>
<feature type="sequence conflict" description="In Ref. 1; BAC06443." evidence="4" ref="1">
    <original>Q</original>
    <variation>R</variation>
    <location>
        <position position="70"/>
    </location>
</feature>